<name>YQGF_FRATT</name>
<comment type="function">
    <text evidence="1">Could be a nuclease involved in processing of the 5'-end of pre-16S rRNA.</text>
</comment>
<comment type="subcellular location">
    <subcellularLocation>
        <location evidence="1">Cytoplasm</location>
    </subcellularLocation>
</comment>
<comment type="similarity">
    <text evidence="1">Belongs to the YqgF nuclease family.</text>
</comment>
<proteinExistence type="inferred from homology"/>
<feature type="chain" id="PRO_0000172065" description="Putative pre-16S rRNA nuclease">
    <location>
        <begin position="1"/>
        <end position="136"/>
    </location>
</feature>
<accession>Q5NG68</accession>
<protein>
    <recommendedName>
        <fullName evidence="1">Putative pre-16S rRNA nuclease</fullName>
        <ecNumber evidence="1">3.1.-.-</ecNumber>
    </recommendedName>
</protein>
<organism>
    <name type="scientific">Francisella tularensis subsp. tularensis (strain SCHU S4 / Schu 4)</name>
    <dbReference type="NCBI Taxonomy" id="177416"/>
    <lineage>
        <taxon>Bacteria</taxon>
        <taxon>Pseudomonadati</taxon>
        <taxon>Pseudomonadota</taxon>
        <taxon>Gammaproteobacteria</taxon>
        <taxon>Thiotrichales</taxon>
        <taxon>Francisellaceae</taxon>
        <taxon>Francisella</taxon>
    </lineage>
</organism>
<gene>
    <name type="ordered locus">FTT_0986</name>
</gene>
<dbReference type="EC" id="3.1.-.-" evidence="1"/>
<dbReference type="EMBL" id="AJ749949">
    <property type="protein sequence ID" value="CAG45619.1"/>
    <property type="molecule type" value="Genomic_DNA"/>
</dbReference>
<dbReference type="RefSeq" id="WP_003021070.1">
    <property type="nucleotide sequence ID" value="NC_006570.2"/>
</dbReference>
<dbReference type="RefSeq" id="YP_169974.1">
    <property type="nucleotide sequence ID" value="NC_006570.2"/>
</dbReference>
<dbReference type="SMR" id="Q5NG68"/>
<dbReference type="IntAct" id="Q5NG68">
    <property type="interactions" value="2"/>
</dbReference>
<dbReference type="STRING" id="177416.FTT_0986"/>
<dbReference type="DNASU" id="3190892"/>
<dbReference type="EnsemblBacteria" id="CAG45619">
    <property type="protein sequence ID" value="CAG45619"/>
    <property type="gene ID" value="FTT_0986"/>
</dbReference>
<dbReference type="KEGG" id="ftu:FTT_0986"/>
<dbReference type="eggNOG" id="COG0816">
    <property type="taxonomic scope" value="Bacteria"/>
</dbReference>
<dbReference type="OrthoDB" id="9796140at2"/>
<dbReference type="Proteomes" id="UP000001174">
    <property type="component" value="Chromosome"/>
</dbReference>
<dbReference type="GO" id="GO:0005829">
    <property type="term" value="C:cytosol"/>
    <property type="evidence" value="ECO:0007669"/>
    <property type="project" value="TreeGrafter"/>
</dbReference>
<dbReference type="GO" id="GO:0004518">
    <property type="term" value="F:nuclease activity"/>
    <property type="evidence" value="ECO:0007669"/>
    <property type="project" value="UniProtKB-KW"/>
</dbReference>
<dbReference type="GO" id="GO:0000967">
    <property type="term" value="P:rRNA 5'-end processing"/>
    <property type="evidence" value="ECO:0007669"/>
    <property type="project" value="UniProtKB-UniRule"/>
</dbReference>
<dbReference type="CDD" id="cd16964">
    <property type="entry name" value="YqgF"/>
    <property type="match status" value="1"/>
</dbReference>
<dbReference type="Gene3D" id="3.30.420.140">
    <property type="entry name" value="YqgF/RNase H-like domain"/>
    <property type="match status" value="1"/>
</dbReference>
<dbReference type="HAMAP" id="MF_00651">
    <property type="entry name" value="Nuclease_YqgF"/>
    <property type="match status" value="1"/>
</dbReference>
<dbReference type="InterPro" id="IPR012337">
    <property type="entry name" value="RNaseH-like_sf"/>
</dbReference>
<dbReference type="InterPro" id="IPR005227">
    <property type="entry name" value="YqgF"/>
</dbReference>
<dbReference type="InterPro" id="IPR006641">
    <property type="entry name" value="YqgF/RNaseH-like_dom"/>
</dbReference>
<dbReference type="InterPro" id="IPR037027">
    <property type="entry name" value="YqgF/RNaseH-like_dom_sf"/>
</dbReference>
<dbReference type="NCBIfam" id="TIGR00250">
    <property type="entry name" value="RNAse_H_YqgF"/>
    <property type="match status" value="1"/>
</dbReference>
<dbReference type="PANTHER" id="PTHR33317">
    <property type="entry name" value="POLYNUCLEOTIDYL TRANSFERASE, RIBONUCLEASE H-LIKE SUPERFAMILY PROTEIN"/>
    <property type="match status" value="1"/>
</dbReference>
<dbReference type="PANTHER" id="PTHR33317:SF4">
    <property type="entry name" value="POLYNUCLEOTIDYL TRANSFERASE, RIBONUCLEASE H-LIKE SUPERFAMILY PROTEIN"/>
    <property type="match status" value="1"/>
</dbReference>
<dbReference type="Pfam" id="PF03652">
    <property type="entry name" value="RuvX"/>
    <property type="match status" value="1"/>
</dbReference>
<dbReference type="SMART" id="SM00732">
    <property type="entry name" value="YqgFc"/>
    <property type="match status" value="1"/>
</dbReference>
<dbReference type="SUPFAM" id="SSF53098">
    <property type="entry name" value="Ribonuclease H-like"/>
    <property type="match status" value="1"/>
</dbReference>
<sequence>MFQSLIAIDYGKARIGISSGQMITKTATPIGTVEAYDGVPNWIELDKIIKCWNPSDIIIGLPLDTQNFETDITKSAKDFAKEVQQRYQRKVHLINEAYSTREARWRLEEVKSKKVSHIKVDALAACVILETWMSEN</sequence>
<keyword id="KW-0963">Cytoplasm</keyword>
<keyword id="KW-0378">Hydrolase</keyword>
<keyword id="KW-0540">Nuclease</keyword>
<keyword id="KW-1185">Reference proteome</keyword>
<keyword id="KW-0690">Ribosome biogenesis</keyword>
<reference key="1">
    <citation type="journal article" date="2005" name="Nat. Genet.">
        <title>The complete genome sequence of Francisella tularensis, the causative agent of tularemia.</title>
        <authorList>
            <person name="Larsson P."/>
            <person name="Oyston P.C.F."/>
            <person name="Chain P."/>
            <person name="Chu M.C."/>
            <person name="Duffield M."/>
            <person name="Fuxelius H.-H."/>
            <person name="Garcia E."/>
            <person name="Haelltorp G."/>
            <person name="Johansson D."/>
            <person name="Isherwood K.E."/>
            <person name="Karp P.D."/>
            <person name="Larsson E."/>
            <person name="Liu Y."/>
            <person name="Michell S."/>
            <person name="Prior J."/>
            <person name="Prior R."/>
            <person name="Malfatti S."/>
            <person name="Sjoestedt A."/>
            <person name="Svensson K."/>
            <person name="Thompson N."/>
            <person name="Vergez L."/>
            <person name="Wagg J.K."/>
            <person name="Wren B.W."/>
            <person name="Lindler L.E."/>
            <person name="Andersson S.G.E."/>
            <person name="Forsman M."/>
            <person name="Titball R.W."/>
        </authorList>
    </citation>
    <scope>NUCLEOTIDE SEQUENCE [LARGE SCALE GENOMIC DNA]</scope>
    <source>
        <strain>SCHU S4 / Schu 4</strain>
    </source>
</reference>
<evidence type="ECO:0000255" key="1">
    <source>
        <dbReference type="HAMAP-Rule" id="MF_00651"/>
    </source>
</evidence>